<reference key="1">
    <citation type="journal article" date="2002" name="Nature">
        <title>Genome sequence of the plant pathogen Ralstonia solanacearum.</title>
        <authorList>
            <person name="Salanoubat M."/>
            <person name="Genin S."/>
            <person name="Artiguenave F."/>
            <person name="Gouzy J."/>
            <person name="Mangenot S."/>
            <person name="Arlat M."/>
            <person name="Billault A."/>
            <person name="Brottier P."/>
            <person name="Camus J.-C."/>
            <person name="Cattolico L."/>
            <person name="Chandler M."/>
            <person name="Choisne N."/>
            <person name="Claudel-Renard C."/>
            <person name="Cunnac S."/>
            <person name="Demange N."/>
            <person name="Gaspin C."/>
            <person name="Lavie M."/>
            <person name="Moisan A."/>
            <person name="Robert C."/>
            <person name="Saurin W."/>
            <person name="Schiex T."/>
            <person name="Siguier P."/>
            <person name="Thebault P."/>
            <person name="Whalen M."/>
            <person name="Wincker P."/>
            <person name="Levy M."/>
            <person name="Weissenbach J."/>
            <person name="Boucher C.A."/>
        </authorList>
    </citation>
    <scope>NUCLEOTIDE SEQUENCE [LARGE SCALE GENOMIC DNA]</scope>
    <source>
        <strain>ATCC BAA-1114 / GMI1000</strain>
    </source>
</reference>
<gene>
    <name evidence="1" type="primary">fusA</name>
    <name type="synonym">fusA1</name>
    <name type="ordered locus">RSc3022</name>
    <name type="ORF">RS04735</name>
</gene>
<comment type="function">
    <text evidence="1">Catalyzes the GTP-dependent ribosomal translocation step during translation elongation. During this step, the ribosome changes from the pre-translocational (PRE) to the post-translocational (POST) state as the newly formed A-site-bound peptidyl-tRNA and P-site-bound deacylated tRNA move to the P and E sites, respectively. Catalyzes the coordinated movement of the two tRNA molecules, the mRNA and conformational changes in the ribosome.</text>
</comment>
<comment type="subcellular location">
    <subcellularLocation>
        <location evidence="1">Cytoplasm</location>
    </subcellularLocation>
</comment>
<comment type="similarity">
    <text evidence="1">Belongs to the TRAFAC class translation factor GTPase superfamily. Classic translation factor GTPase family. EF-G/EF-2 subfamily.</text>
</comment>
<keyword id="KW-0963">Cytoplasm</keyword>
<keyword id="KW-0251">Elongation factor</keyword>
<keyword id="KW-0342">GTP-binding</keyword>
<keyword id="KW-0547">Nucleotide-binding</keyword>
<keyword id="KW-0648">Protein biosynthesis</keyword>
<keyword id="KW-1185">Reference proteome</keyword>
<accession>Q8XV10</accession>
<protein>
    <recommendedName>
        <fullName evidence="1">Elongation factor G 1</fullName>
        <shortName evidence="1">EF-G 1</shortName>
    </recommendedName>
</protein>
<name>EFG1_RALN1</name>
<evidence type="ECO:0000255" key="1">
    <source>
        <dbReference type="HAMAP-Rule" id="MF_00054"/>
    </source>
</evidence>
<feature type="chain" id="PRO_0000091189" description="Elongation factor G 1">
    <location>
        <begin position="1"/>
        <end position="703"/>
    </location>
</feature>
<feature type="domain" description="tr-type G">
    <location>
        <begin position="8"/>
        <end position="290"/>
    </location>
</feature>
<feature type="binding site" evidence="1">
    <location>
        <begin position="17"/>
        <end position="24"/>
    </location>
    <ligand>
        <name>GTP</name>
        <dbReference type="ChEBI" id="CHEBI:37565"/>
    </ligand>
</feature>
<feature type="binding site" evidence="1">
    <location>
        <begin position="88"/>
        <end position="92"/>
    </location>
    <ligand>
        <name>GTP</name>
        <dbReference type="ChEBI" id="CHEBI:37565"/>
    </ligand>
</feature>
<feature type="binding site" evidence="1">
    <location>
        <begin position="142"/>
        <end position="145"/>
    </location>
    <ligand>
        <name>GTP</name>
        <dbReference type="ChEBI" id="CHEBI:37565"/>
    </ligand>
</feature>
<dbReference type="EMBL" id="AL646052">
    <property type="protein sequence ID" value="CAD16731.1"/>
    <property type="molecule type" value="Genomic_DNA"/>
</dbReference>
<dbReference type="RefSeq" id="WP_011002919.1">
    <property type="nucleotide sequence ID" value="NC_003295.1"/>
</dbReference>
<dbReference type="SMR" id="Q8XV10"/>
<dbReference type="STRING" id="267608.RSc3022"/>
<dbReference type="EnsemblBacteria" id="CAD16731">
    <property type="protein sequence ID" value="CAD16731"/>
    <property type="gene ID" value="RSc3022"/>
</dbReference>
<dbReference type="KEGG" id="rso:RSc3022"/>
<dbReference type="eggNOG" id="COG0480">
    <property type="taxonomic scope" value="Bacteria"/>
</dbReference>
<dbReference type="HOGENOM" id="CLU_002794_4_1_4"/>
<dbReference type="Proteomes" id="UP000001436">
    <property type="component" value="Chromosome"/>
</dbReference>
<dbReference type="GO" id="GO:0005737">
    <property type="term" value="C:cytoplasm"/>
    <property type="evidence" value="ECO:0007669"/>
    <property type="project" value="UniProtKB-SubCell"/>
</dbReference>
<dbReference type="GO" id="GO:0005525">
    <property type="term" value="F:GTP binding"/>
    <property type="evidence" value="ECO:0007669"/>
    <property type="project" value="UniProtKB-UniRule"/>
</dbReference>
<dbReference type="GO" id="GO:0003924">
    <property type="term" value="F:GTPase activity"/>
    <property type="evidence" value="ECO:0007669"/>
    <property type="project" value="InterPro"/>
</dbReference>
<dbReference type="GO" id="GO:0097216">
    <property type="term" value="F:guanosine tetraphosphate binding"/>
    <property type="evidence" value="ECO:0007669"/>
    <property type="project" value="UniProtKB-ARBA"/>
</dbReference>
<dbReference type="GO" id="GO:0003746">
    <property type="term" value="F:translation elongation factor activity"/>
    <property type="evidence" value="ECO:0007669"/>
    <property type="project" value="UniProtKB-UniRule"/>
</dbReference>
<dbReference type="GO" id="GO:0032790">
    <property type="term" value="P:ribosome disassembly"/>
    <property type="evidence" value="ECO:0007669"/>
    <property type="project" value="TreeGrafter"/>
</dbReference>
<dbReference type="CDD" id="cd01886">
    <property type="entry name" value="EF-G"/>
    <property type="match status" value="1"/>
</dbReference>
<dbReference type="CDD" id="cd16262">
    <property type="entry name" value="EFG_III"/>
    <property type="match status" value="1"/>
</dbReference>
<dbReference type="CDD" id="cd01434">
    <property type="entry name" value="EFG_mtEFG1_IV"/>
    <property type="match status" value="1"/>
</dbReference>
<dbReference type="CDD" id="cd03713">
    <property type="entry name" value="EFG_mtEFG_C"/>
    <property type="match status" value="1"/>
</dbReference>
<dbReference type="CDD" id="cd04088">
    <property type="entry name" value="EFG_mtEFG_II"/>
    <property type="match status" value="1"/>
</dbReference>
<dbReference type="FunFam" id="2.40.30.10:FF:000006">
    <property type="entry name" value="Elongation factor G"/>
    <property type="match status" value="1"/>
</dbReference>
<dbReference type="FunFam" id="3.30.230.10:FF:000003">
    <property type="entry name" value="Elongation factor G"/>
    <property type="match status" value="1"/>
</dbReference>
<dbReference type="FunFam" id="3.30.70.240:FF:000001">
    <property type="entry name" value="Elongation factor G"/>
    <property type="match status" value="1"/>
</dbReference>
<dbReference type="FunFam" id="3.30.70.870:FF:000001">
    <property type="entry name" value="Elongation factor G"/>
    <property type="match status" value="1"/>
</dbReference>
<dbReference type="FunFam" id="3.40.50.300:FF:000029">
    <property type="entry name" value="Elongation factor G"/>
    <property type="match status" value="1"/>
</dbReference>
<dbReference type="Gene3D" id="3.30.230.10">
    <property type="match status" value="1"/>
</dbReference>
<dbReference type="Gene3D" id="3.30.70.240">
    <property type="match status" value="1"/>
</dbReference>
<dbReference type="Gene3D" id="3.30.70.870">
    <property type="entry name" value="Elongation Factor G (Translational Gtpase), domain 3"/>
    <property type="match status" value="1"/>
</dbReference>
<dbReference type="Gene3D" id="3.40.50.300">
    <property type="entry name" value="P-loop containing nucleotide triphosphate hydrolases"/>
    <property type="match status" value="1"/>
</dbReference>
<dbReference type="Gene3D" id="2.40.30.10">
    <property type="entry name" value="Translation factors"/>
    <property type="match status" value="1"/>
</dbReference>
<dbReference type="HAMAP" id="MF_00054_B">
    <property type="entry name" value="EF_G_EF_2_B"/>
    <property type="match status" value="1"/>
</dbReference>
<dbReference type="InterPro" id="IPR041095">
    <property type="entry name" value="EFG_II"/>
</dbReference>
<dbReference type="InterPro" id="IPR009022">
    <property type="entry name" value="EFG_III"/>
</dbReference>
<dbReference type="InterPro" id="IPR035647">
    <property type="entry name" value="EFG_III/V"/>
</dbReference>
<dbReference type="InterPro" id="IPR047872">
    <property type="entry name" value="EFG_IV"/>
</dbReference>
<dbReference type="InterPro" id="IPR035649">
    <property type="entry name" value="EFG_V"/>
</dbReference>
<dbReference type="InterPro" id="IPR000640">
    <property type="entry name" value="EFG_V-like"/>
</dbReference>
<dbReference type="InterPro" id="IPR004161">
    <property type="entry name" value="EFTu-like_2"/>
</dbReference>
<dbReference type="InterPro" id="IPR031157">
    <property type="entry name" value="G_TR_CS"/>
</dbReference>
<dbReference type="InterPro" id="IPR027417">
    <property type="entry name" value="P-loop_NTPase"/>
</dbReference>
<dbReference type="InterPro" id="IPR020568">
    <property type="entry name" value="Ribosomal_Su5_D2-typ_SF"/>
</dbReference>
<dbReference type="InterPro" id="IPR014721">
    <property type="entry name" value="Ribsml_uS5_D2-typ_fold_subgr"/>
</dbReference>
<dbReference type="InterPro" id="IPR005225">
    <property type="entry name" value="Small_GTP-bd"/>
</dbReference>
<dbReference type="InterPro" id="IPR000795">
    <property type="entry name" value="T_Tr_GTP-bd_dom"/>
</dbReference>
<dbReference type="InterPro" id="IPR009000">
    <property type="entry name" value="Transl_B-barrel_sf"/>
</dbReference>
<dbReference type="InterPro" id="IPR004540">
    <property type="entry name" value="Transl_elong_EFG/EF2"/>
</dbReference>
<dbReference type="InterPro" id="IPR005517">
    <property type="entry name" value="Transl_elong_EFG/EF2_IV"/>
</dbReference>
<dbReference type="NCBIfam" id="TIGR00484">
    <property type="entry name" value="EF-G"/>
    <property type="match status" value="1"/>
</dbReference>
<dbReference type="NCBIfam" id="NF009381">
    <property type="entry name" value="PRK12740.1-5"/>
    <property type="match status" value="1"/>
</dbReference>
<dbReference type="NCBIfam" id="TIGR00231">
    <property type="entry name" value="small_GTP"/>
    <property type="match status" value="1"/>
</dbReference>
<dbReference type="PANTHER" id="PTHR43261:SF1">
    <property type="entry name" value="RIBOSOME-RELEASING FACTOR 2, MITOCHONDRIAL"/>
    <property type="match status" value="1"/>
</dbReference>
<dbReference type="PANTHER" id="PTHR43261">
    <property type="entry name" value="TRANSLATION ELONGATION FACTOR G-RELATED"/>
    <property type="match status" value="1"/>
</dbReference>
<dbReference type="Pfam" id="PF00679">
    <property type="entry name" value="EFG_C"/>
    <property type="match status" value="1"/>
</dbReference>
<dbReference type="Pfam" id="PF14492">
    <property type="entry name" value="EFG_III"/>
    <property type="match status" value="1"/>
</dbReference>
<dbReference type="Pfam" id="PF03764">
    <property type="entry name" value="EFG_IV"/>
    <property type="match status" value="1"/>
</dbReference>
<dbReference type="Pfam" id="PF00009">
    <property type="entry name" value="GTP_EFTU"/>
    <property type="match status" value="1"/>
</dbReference>
<dbReference type="Pfam" id="PF03144">
    <property type="entry name" value="GTP_EFTU_D2"/>
    <property type="match status" value="1"/>
</dbReference>
<dbReference type="PRINTS" id="PR00315">
    <property type="entry name" value="ELONGATNFCT"/>
</dbReference>
<dbReference type="SMART" id="SM00838">
    <property type="entry name" value="EFG_C"/>
    <property type="match status" value="1"/>
</dbReference>
<dbReference type="SMART" id="SM00889">
    <property type="entry name" value="EFG_IV"/>
    <property type="match status" value="1"/>
</dbReference>
<dbReference type="SUPFAM" id="SSF54980">
    <property type="entry name" value="EF-G C-terminal domain-like"/>
    <property type="match status" value="2"/>
</dbReference>
<dbReference type="SUPFAM" id="SSF52540">
    <property type="entry name" value="P-loop containing nucleoside triphosphate hydrolases"/>
    <property type="match status" value="1"/>
</dbReference>
<dbReference type="SUPFAM" id="SSF54211">
    <property type="entry name" value="Ribosomal protein S5 domain 2-like"/>
    <property type="match status" value="1"/>
</dbReference>
<dbReference type="SUPFAM" id="SSF50447">
    <property type="entry name" value="Translation proteins"/>
    <property type="match status" value="1"/>
</dbReference>
<dbReference type="PROSITE" id="PS00301">
    <property type="entry name" value="G_TR_1"/>
    <property type="match status" value="1"/>
</dbReference>
<dbReference type="PROSITE" id="PS51722">
    <property type="entry name" value="G_TR_2"/>
    <property type="match status" value="1"/>
</dbReference>
<organism>
    <name type="scientific">Ralstonia nicotianae (strain ATCC BAA-1114 / GMI1000)</name>
    <name type="common">Ralstonia solanacearum</name>
    <dbReference type="NCBI Taxonomy" id="267608"/>
    <lineage>
        <taxon>Bacteria</taxon>
        <taxon>Pseudomonadati</taxon>
        <taxon>Pseudomonadota</taxon>
        <taxon>Betaproteobacteria</taxon>
        <taxon>Burkholderiales</taxon>
        <taxon>Burkholderiaceae</taxon>
        <taxon>Ralstonia</taxon>
        <taxon>Ralstonia solanacearum species complex</taxon>
    </lineage>
</organism>
<proteinExistence type="inferred from homology"/>
<sequence length="703" mass="77511">MARKTPIERYRNIGISAHIDAGKTTTTERILFYTGVNHKIGEVHDGAATMDWMEQEQERGITITSAATTAFWKGMGGNYPEHRFNIIDTPGHVDFTIEVERSMRVLDGACMVYCAVGGVQPQSETVWRQANKYGVPRLAFVNKMDRTGANFFKVYDQLKTRLKANPVPVVVPIGAEDGFQGVVDLLEMKAIIWDEASQGVKFEYKDIPAELQATAEEWREKMVESAAEASEALMEKYLGGEELTRAEIVKALRDRTIACEIQPMLCGTAFKNKGVQRMLDAVIDFLPSPVDIPPVKGVDENDDEKKLERKADDNEKFSALAFKIMTDPFVGQLIFFRVYSGKINSGDTVYNPVKQKKERLGRILQMHANQREEIKEVLAGDIAAAVGLKDATTGDTLCDPTAPIVLERMVFPEPVISQAVEPKTKADQEKMGIALNRLAAEDPSFRVRTDEESGQTIISGMGELHLEILVDRMKREFGVEANIGAPQVAYRETIRKKAEDVEGKFVKQSGGRGQYGHAVITLEPQEPGKGFEFVDAIKGGVIPREYIPAVEKGIVDTLPSGILAGFPVVDVKVTLTFGSYHDVDSNENAFRMAGSMAFKDAMRKASPVLLEPMMAVEVETPEDYTGTVMGDLSSRRGIVQGMDDMVGGGKIIKAEVPLSEMFGYSTSLRSATQGRATYTMEFKHYSEAPKNIAEAVMAAKGTK</sequence>